<accession>C3MAJ1</accession>
<evidence type="ECO:0000255" key="1">
    <source>
        <dbReference type="HAMAP-Rule" id="MF_01849"/>
    </source>
</evidence>
<evidence type="ECO:0000255" key="2">
    <source>
        <dbReference type="PROSITE-ProRule" id="PRU01266"/>
    </source>
</evidence>
<dbReference type="EC" id="2.1.1.192" evidence="1"/>
<dbReference type="EMBL" id="CP001389">
    <property type="protein sequence ID" value="ACP26984.1"/>
    <property type="molecule type" value="Genomic_DNA"/>
</dbReference>
<dbReference type="RefSeq" id="WP_012709732.1">
    <property type="nucleotide sequence ID" value="NC_012587.1"/>
</dbReference>
<dbReference type="RefSeq" id="YP_002827737.1">
    <property type="nucleotide sequence ID" value="NC_012587.1"/>
</dbReference>
<dbReference type="SMR" id="C3MAJ1"/>
<dbReference type="STRING" id="394.NGR_c32520"/>
<dbReference type="KEGG" id="rhi:NGR_c32520"/>
<dbReference type="PATRIC" id="fig|394.7.peg.6094"/>
<dbReference type="eggNOG" id="COG0820">
    <property type="taxonomic scope" value="Bacteria"/>
</dbReference>
<dbReference type="HOGENOM" id="CLU_029101_2_0_5"/>
<dbReference type="OrthoDB" id="9793973at2"/>
<dbReference type="Proteomes" id="UP000001054">
    <property type="component" value="Chromosome"/>
</dbReference>
<dbReference type="GO" id="GO:0005737">
    <property type="term" value="C:cytoplasm"/>
    <property type="evidence" value="ECO:0007669"/>
    <property type="project" value="UniProtKB-SubCell"/>
</dbReference>
<dbReference type="GO" id="GO:0051539">
    <property type="term" value="F:4 iron, 4 sulfur cluster binding"/>
    <property type="evidence" value="ECO:0007669"/>
    <property type="project" value="UniProtKB-UniRule"/>
</dbReference>
<dbReference type="GO" id="GO:0046872">
    <property type="term" value="F:metal ion binding"/>
    <property type="evidence" value="ECO:0007669"/>
    <property type="project" value="UniProtKB-KW"/>
</dbReference>
<dbReference type="GO" id="GO:0070040">
    <property type="term" value="F:rRNA (adenine(2503)-C2-)-methyltransferase activity"/>
    <property type="evidence" value="ECO:0007669"/>
    <property type="project" value="UniProtKB-UniRule"/>
</dbReference>
<dbReference type="GO" id="GO:0019843">
    <property type="term" value="F:rRNA binding"/>
    <property type="evidence" value="ECO:0007669"/>
    <property type="project" value="UniProtKB-UniRule"/>
</dbReference>
<dbReference type="GO" id="GO:0002935">
    <property type="term" value="F:tRNA (adenine(37)-C2)-methyltransferase activity"/>
    <property type="evidence" value="ECO:0007669"/>
    <property type="project" value="UniProtKB-UniRule"/>
</dbReference>
<dbReference type="GO" id="GO:0000049">
    <property type="term" value="F:tRNA binding"/>
    <property type="evidence" value="ECO:0007669"/>
    <property type="project" value="UniProtKB-UniRule"/>
</dbReference>
<dbReference type="GO" id="GO:0070475">
    <property type="term" value="P:rRNA base methylation"/>
    <property type="evidence" value="ECO:0007669"/>
    <property type="project" value="UniProtKB-UniRule"/>
</dbReference>
<dbReference type="GO" id="GO:0030488">
    <property type="term" value="P:tRNA methylation"/>
    <property type="evidence" value="ECO:0007669"/>
    <property type="project" value="UniProtKB-UniRule"/>
</dbReference>
<dbReference type="CDD" id="cd01335">
    <property type="entry name" value="Radical_SAM"/>
    <property type="match status" value="1"/>
</dbReference>
<dbReference type="FunFam" id="3.20.20.70:FF:000008">
    <property type="entry name" value="Dual-specificity RNA methyltransferase RlmN"/>
    <property type="match status" value="1"/>
</dbReference>
<dbReference type="Gene3D" id="1.10.150.530">
    <property type="match status" value="1"/>
</dbReference>
<dbReference type="Gene3D" id="3.20.20.70">
    <property type="entry name" value="Aldolase class I"/>
    <property type="match status" value="1"/>
</dbReference>
<dbReference type="HAMAP" id="MF_01849">
    <property type="entry name" value="RNA_methyltr_RlmN"/>
    <property type="match status" value="1"/>
</dbReference>
<dbReference type="InterPro" id="IPR013785">
    <property type="entry name" value="Aldolase_TIM"/>
</dbReference>
<dbReference type="InterPro" id="IPR040072">
    <property type="entry name" value="Methyltransferase_A"/>
</dbReference>
<dbReference type="InterPro" id="IPR048641">
    <property type="entry name" value="RlmN_N"/>
</dbReference>
<dbReference type="InterPro" id="IPR027492">
    <property type="entry name" value="RNA_MTrfase_RlmN"/>
</dbReference>
<dbReference type="InterPro" id="IPR004383">
    <property type="entry name" value="rRNA_lsu_MTrfase_RlmN/Cfr"/>
</dbReference>
<dbReference type="InterPro" id="IPR007197">
    <property type="entry name" value="rSAM"/>
</dbReference>
<dbReference type="NCBIfam" id="TIGR00048">
    <property type="entry name" value="rRNA_mod_RlmN"/>
    <property type="match status" value="1"/>
</dbReference>
<dbReference type="PANTHER" id="PTHR30544">
    <property type="entry name" value="23S RRNA METHYLTRANSFERASE"/>
    <property type="match status" value="1"/>
</dbReference>
<dbReference type="PANTHER" id="PTHR30544:SF5">
    <property type="entry name" value="RADICAL SAM CORE DOMAIN-CONTAINING PROTEIN"/>
    <property type="match status" value="1"/>
</dbReference>
<dbReference type="Pfam" id="PF04055">
    <property type="entry name" value="Radical_SAM"/>
    <property type="match status" value="1"/>
</dbReference>
<dbReference type="Pfam" id="PF21016">
    <property type="entry name" value="RlmN_N"/>
    <property type="match status" value="1"/>
</dbReference>
<dbReference type="PIRSF" id="PIRSF006004">
    <property type="entry name" value="CHP00048"/>
    <property type="match status" value="1"/>
</dbReference>
<dbReference type="SFLD" id="SFLDF00275">
    <property type="entry name" value="adenosine_C2_methyltransferase"/>
    <property type="match status" value="1"/>
</dbReference>
<dbReference type="SFLD" id="SFLDG01062">
    <property type="entry name" value="methyltransferase_(Class_A)"/>
    <property type="match status" value="1"/>
</dbReference>
<dbReference type="SUPFAM" id="SSF102114">
    <property type="entry name" value="Radical SAM enzymes"/>
    <property type="match status" value="1"/>
</dbReference>
<dbReference type="PROSITE" id="PS51918">
    <property type="entry name" value="RADICAL_SAM"/>
    <property type="match status" value="1"/>
</dbReference>
<reference key="1">
    <citation type="journal article" date="2009" name="Appl. Environ. Microbiol.">
        <title>Rhizobium sp. strain NGR234 possesses a remarkable number of secretion systems.</title>
        <authorList>
            <person name="Schmeisser C."/>
            <person name="Liesegang H."/>
            <person name="Krysciak D."/>
            <person name="Bakkou N."/>
            <person name="Le Quere A."/>
            <person name="Wollherr A."/>
            <person name="Heinemeyer I."/>
            <person name="Morgenstern B."/>
            <person name="Pommerening-Roeser A."/>
            <person name="Flores M."/>
            <person name="Palacios R."/>
            <person name="Brenner S."/>
            <person name="Gottschalk G."/>
            <person name="Schmitz R.A."/>
            <person name="Broughton W.J."/>
            <person name="Perret X."/>
            <person name="Strittmatter A.W."/>
            <person name="Streit W.R."/>
        </authorList>
    </citation>
    <scope>NUCLEOTIDE SEQUENCE [LARGE SCALE GENOMIC DNA]</scope>
    <source>
        <strain>NBRC 101917 / NGR234</strain>
    </source>
</reference>
<keyword id="KW-0004">4Fe-4S</keyword>
<keyword id="KW-0963">Cytoplasm</keyword>
<keyword id="KW-1015">Disulfide bond</keyword>
<keyword id="KW-0408">Iron</keyword>
<keyword id="KW-0411">Iron-sulfur</keyword>
<keyword id="KW-0479">Metal-binding</keyword>
<keyword id="KW-0489">Methyltransferase</keyword>
<keyword id="KW-1185">Reference proteome</keyword>
<keyword id="KW-0698">rRNA processing</keyword>
<keyword id="KW-0949">S-adenosyl-L-methionine</keyword>
<keyword id="KW-0808">Transferase</keyword>
<keyword id="KW-0819">tRNA processing</keyword>
<organism>
    <name type="scientific">Sinorhizobium fredii (strain NBRC 101917 / NGR234)</name>
    <dbReference type="NCBI Taxonomy" id="394"/>
    <lineage>
        <taxon>Bacteria</taxon>
        <taxon>Pseudomonadati</taxon>
        <taxon>Pseudomonadota</taxon>
        <taxon>Alphaproteobacteria</taxon>
        <taxon>Hyphomicrobiales</taxon>
        <taxon>Rhizobiaceae</taxon>
        <taxon>Sinorhizobium/Ensifer group</taxon>
        <taxon>Sinorhizobium</taxon>
    </lineage>
</organism>
<protein>
    <recommendedName>
        <fullName evidence="1">Dual-specificity RNA methyltransferase RlmN</fullName>
        <ecNumber evidence="1">2.1.1.192</ecNumber>
    </recommendedName>
    <alternativeName>
        <fullName evidence="1">23S rRNA (adenine(2503)-C(2))-methyltransferase</fullName>
    </alternativeName>
    <alternativeName>
        <fullName evidence="1">23S rRNA m2A2503 methyltransferase</fullName>
    </alternativeName>
    <alternativeName>
        <fullName evidence="1">Ribosomal RNA large subunit methyltransferase N</fullName>
    </alternativeName>
    <alternativeName>
        <fullName evidence="1">tRNA (adenine(37)-C(2))-methyltransferase</fullName>
    </alternativeName>
    <alternativeName>
        <fullName evidence="1">tRNA m2A37 methyltransferase</fullName>
    </alternativeName>
</protein>
<name>RLMN_SINFN</name>
<proteinExistence type="inferred from homology"/>
<feature type="chain" id="PRO_1000216125" description="Dual-specificity RNA methyltransferase RlmN">
    <location>
        <begin position="1"/>
        <end position="411"/>
    </location>
</feature>
<feature type="domain" description="Radical SAM core" evidence="2">
    <location>
        <begin position="130"/>
        <end position="379"/>
    </location>
</feature>
<feature type="active site" description="Proton acceptor" evidence="1">
    <location>
        <position position="124"/>
    </location>
</feature>
<feature type="active site" description="S-methylcysteine intermediate" evidence="1">
    <location>
        <position position="382"/>
    </location>
</feature>
<feature type="binding site" evidence="1">
    <location>
        <position position="144"/>
    </location>
    <ligand>
        <name>[4Fe-4S] cluster</name>
        <dbReference type="ChEBI" id="CHEBI:49883"/>
        <note>4Fe-4S-S-AdoMet</note>
    </ligand>
</feature>
<feature type="binding site" evidence="1">
    <location>
        <position position="148"/>
    </location>
    <ligand>
        <name>[4Fe-4S] cluster</name>
        <dbReference type="ChEBI" id="CHEBI:49883"/>
        <note>4Fe-4S-S-AdoMet</note>
    </ligand>
</feature>
<feature type="binding site" evidence="1">
    <location>
        <position position="151"/>
    </location>
    <ligand>
        <name>[4Fe-4S] cluster</name>
        <dbReference type="ChEBI" id="CHEBI:49883"/>
        <note>4Fe-4S-S-AdoMet</note>
    </ligand>
</feature>
<feature type="binding site" evidence="1">
    <location>
        <begin position="208"/>
        <end position="209"/>
    </location>
    <ligand>
        <name>S-adenosyl-L-methionine</name>
        <dbReference type="ChEBI" id="CHEBI:59789"/>
    </ligand>
</feature>
<feature type="binding site" evidence="1">
    <location>
        <position position="240"/>
    </location>
    <ligand>
        <name>S-adenosyl-L-methionine</name>
        <dbReference type="ChEBI" id="CHEBI:59789"/>
    </ligand>
</feature>
<feature type="binding site" evidence="1">
    <location>
        <begin position="262"/>
        <end position="264"/>
    </location>
    <ligand>
        <name>S-adenosyl-L-methionine</name>
        <dbReference type="ChEBI" id="CHEBI:59789"/>
    </ligand>
</feature>
<feature type="binding site" evidence="1">
    <location>
        <position position="339"/>
    </location>
    <ligand>
        <name>S-adenosyl-L-methionine</name>
        <dbReference type="ChEBI" id="CHEBI:59789"/>
    </ligand>
</feature>
<feature type="disulfide bond" description="(transient)" evidence="1">
    <location>
        <begin position="137"/>
        <end position="382"/>
    </location>
</feature>
<comment type="function">
    <text evidence="1">Specifically methylates position 2 of adenine 2503 in 23S rRNA and position 2 of adenine 37 in tRNAs. m2A2503 modification seems to play a crucial role in the proofreading step occurring at the peptidyl transferase center and thus would serve to optimize ribosomal fidelity.</text>
</comment>
<comment type="catalytic activity">
    <reaction evidence="1">
        <text>adenosine(2503) in 23S rRNA + 2 reduced [2Fe-2S]-[ferredoxin] + 2 S-adenosyl-L-methionine = 2-methyladenosine(2503) in 23S rRNA + 5'-deoxyadenosine + L-methionine + 2 oxidized [2Fe-2S]-[ferredoxin] + S-adenosyl-L-homocysteine</text>
        <dbReference type="Rhea" id="RHEA:42916"/>
        <dbReference type="Rhea" id="RHEA-COMP:10000"/>
        <dbReference type="Rhea" id="RHEA-COMP:10001"/>
        <dbReference type="Rhea" id="RHEA-COMP:10152"/>
        <dbReference type="Rhea" id="RHEA-COMP:10282"/>
        <dbReference type="ChEBI" id="CHEBI:17319"/>
        <dbReference type="ChEBI" id="CHEBI:33737"/>
        <dbReference type="ChEBI" id="CHEBI:33738"/>
        <dbReference type="ChEBI" id="CHEBI:57844"/>
        <dbReference type="ChEBI" id="CHEBI:57856"/>
        <dbReference type="ChEBI" id="CHEBI:59789"/>
        <dbReference type="ChEBI" id="CHEBI:74411"/>
        <dbReference type="ChEBI" id="CHEBI:74497"/>
        <dbReference type="EC" id="2.1.1.192"/>
    </reaction>
</comment>
<comment type="catalytic activity">
    <reaction evidence="1">
        <text>adenosine(37) in tRNA + 2 reduced [2Fe-2S]-[ferredoxin] + 2 S-adenosyl-L-methionine = 2-methyladenosine(37) in tRNA + 5'-deoxyadenosine + L-methionine + 2 oxidized [2Fe-2S]-[ferredoxin] + S-adenosyl-L-homocysteine</text>
        <dbReference type="Rhea" id="RHEA:43332"/>
        <dbReference type="Rhea" id="RHEA-COMP:10000"/>
        <dbReference type="Rhea" id="RHEA-COMP:10001"/>
        <dbReference type="Rhea" id="RHEA-COMP:10162"/>
        <dbReference type="Rhea" id="RHEA-COMP:10485"/>
        <dbReference type="ChEBI" id="CHEBI:17319"/>
        <dbReference type="ChEBI" id="CHEBI:33737"/>
        <dbReference type="ChEBI" id="CHEBI:33738"/>
        <dbReference type="ChEBI" id="CHEBI:57844"/>
        <dbReference type="ChEBI" id="CHEBI:57856"/>
        <dbReference type="ChEBI" id="CHEBI:59789"/>
        <dbReference type="ChEBI" id="CHEBI:74411"/>
        <dbReference type="ChEBI" id="CHEBI:74497"/>
        <dbReference type="EC" id="2.1.1.192"/>
    </reaction>
</comment>
<comment type="cofactor">
    <cofactor evidence="1">
        <name>[4Fe-4S] cluster</name>
        <dbReference type="ChEBI" id="CHEBI:49883"/>
    </cofactor>
    <text evidence="1">Binds 1 [4Fe-4S] cluster. The cluster is coordinated with 3 cysteines and an exchangeable S-adenosyl-L-methionine.</text>
</comment>
<comment type="subcellular location">
    <subcellularLocation>
        <location evidence="1">Cytoplasm</location>
    </subcellularLocation>
</comment>
<comment type="miscellaneous">
    <text evidence="1">Reaction proceeds by a ping-pong mechanism involving intermediate methylation of a conserved cysteine residue.</text>
</comment>
<comment type="similarity">
    <text evidence="1">Belongs to the radical SAM superfamily. RlmN family.</text>
</comment>
<gene>
    <name evidence="1" type="primary">rlmN</name>
    <name type="ordered locus">NGR_c32520</name>
</gene>
<sequence length="411" mass="46181">MPATEILNRADIVKAPQVRPQPQTEKPSLIGLLREDMAKLLVEKGVPERQVKMRVSQLWHWLYVRGVSDFDQMSNVSKDMREMLKEHFTVARPEIVEEQVSGDGTRKWLLRFPPRGAGRPVEIETVYIPEEGRGTLCISSQVGCTLTCSFCHTGTQKLVRNLTAEEILAQLLLARDRLGDFPERDTPQGAIVPAEGRKITNIVMMGMGEPLYNFDNVKTALLIASDGDGLSLSKRRITLSTSGIVPEIYRTGEEIGVMLAISLHAVNDELRDMLVPINKKYPLKELMEACRAYPGLSNARRITFEYVMLKDVNDSLQDAKELVKLLKGIPAKINLIPFNPWPGTNYQCSDWEQIEAFADFINQAGYASPIRTPRGRDILAACGQLKSESERMRKVDRLAFEAMMIANHGED</sequence>